<organism>
    <name type="scientific">Rotavirus A (strain RVA/Human/Japan/K8/1977/G1P3A[9])</name>
    <name type="common">RV-A</name>
    <dbReference type="NCBI Taxonomy" id="39012"/>
    <lineage>
        <taxon>Viruses</taxon>
        <taxon>Riboviria</taxon>
        <taxon>Orthornavirae</taxon>
        <taxon>Duplornaviricota</taxon>
        <taxon>Resentoviricetes</taxon>
        <taxon>Reovirales</taxon>
        <taxon>Sedoreoviridae</taxon>
        <taxon>Rotavirus</taxon>
        <taxon>Rotavirus A</taxon>
    </lineage>
</organism>
<proteinExistence type="evidence at transcript level"/>
<dbReference type="EMBL" id="D16344">
    <property type="protein sequence ID" value="BAA03848.1"/>
    <property type="molecule type" value="mRNA"/>
</dbReference>
<dbReference type="SMR" id="Q86207"/>
<dbReference type="GO" id="GO:0044166">
    <property type="term" value="C:host cell endoplasmic reticulum lumen"/>
    <property type="evidence" value="ECO:0007669"/>
    <property type="project" value="UniProtKB-SubCell"/>
</dbReference>
<dbReference type="GO" id="GO:0039621">
    <property type="term" value="C:T=13 icosahedral viral capsid"/>
    <property type="evidence" value="ECO:0007669"/>
    <property type="project" value="UniProtKB-UniRule"/>
</dbReference>
<dbReference type="GO" id="GO:0039624">
    <property type="term" value="C:viral outer capsid"/>
    <property type="evidence" value="ECO:0007669"/>
    <property type="project" value="UniProtKB-UniRule"/>
</dbReference>
<dbReference type="GO" id="GO:0046872">
    <property type="term" value="F:metal ion binding"/>
    <property type="evidence" value="ECO:0007669"/>
    <property type="project" value="UniProtKB-KW"/>
</dbReference>
<dbReference type="Gene3D" id="3.40.50.11130">
    <property type="entry name" value="Glycoprotein VP7, domain 1"/>
    <property type="match status" value="1"/>
</dbReference>
<dbReference type="Gene3D" id="2.60.120.800">
    <property type="entry name" value="Rotavirus outer-layer protein VP7, domain 2"/>
    <property type="match status" value="1"/>
</dbReference>
<dbReference type="HAMAP" id="MF_04130">
    <property type="entry name" value="Rota_VP7"/>
    <property type="match status" value="1"/>
</dbReference>
<dbReference type="HAMAP" id="MF_04131">
    <property type="entry name" value="Rota_VP7_A"/>
    <property type="match status" value="1"/>
</dbReference>
<dbReference type="InterPro" id="IPR001963">
    <property type="entry name" value="VP7"/>
</dbReference>
<dbReference type="InterPro" id="IPR042207">
    <property type="entry name" value="VP7_1"/>
</dbReference>
<dbReference type="InterPro" id="IPR042210">
    <property type="entry name" value="VP7_2"/>
</dbReference>
<dbReference type="Pfam" id="PF00434">
    <property type="entry name" value="VP7"/>
    <property type="match status" value="1"/>
</dbReference>
<accession>Q86207</accession>
<comment type="function">
    <text evidence="2">Calcium-binding protein that interacts with rotavirus cell receptors once the initial attachment by VP4 has been achieved. Rotavirus attachment and entry into the host cell probably involves multiple sequential contacts between the outer capsid proteins VP4 and VP7, and the cell receptors. Following entry into the host cell, low intracellular or intravesicular Ca(2+) concentration probably causes the calcium-stabilized VP7 trimers to dissociate from the virion. This step is probably necessary for the membrane-disrupting entry step and the release of VP4, which is locked onto the virion by VP7.</text>
</comment>
<comment type="subunit">
    <text evidence="2">Homotrimer; disulfide-linked. 2 Ca(2+) ions bound at each subunit interface in the trimer hold the trimer together. Interacts with the intermediate capsid protein VP6. Interacts with the outer capsid protein VP5*.</text>
</comment>
<comment type="subcellular location">
    <subcellularLocation>
        <location evidence="2">Virion</location>
    </subcellularLocation>
    <subcellularLocation>
        <location evidence="2">Host endoplasmic reticulum lumen</location>
    </subcellularLocation>
    <text evidence="2">The outer layer contains 780 copies of VP7, grouped as 260 trimers. Immature double-layered particles assembled in the cytoplasm bud across the membrane of the endoplasmic reticulum, acquiring during this process a transient lipid membrane that is modified with the ER resident viral glycoproteins NSP4 and VP7; these enveloped particles also contain VP4. As the particles move towards the interior of the ER cisternae, the transient lipid membrane and the non-structural protein NSP4 are lost, while the virus surface proteins VP4 and VP7 rearrange to form the outermost virus protein layer, yielding mature infectious triple-layered particles.</text>
</comment>
<comment type="alternative products">
    <event type="alternative initiation"/>
    <isoform>
        <id>Q86207-1</id>
        <name>1</name>
        <sequence type="displayed"/>
    </isoform>
    <isoform>
        <id>Q86207-2</id>
        <name>2</name>
        <sequence type="described" ref="VSP_038620"/>
    </isoform>
</comment>
<comment type="PTM">
    <text evidence="2">N-glycosylated.</text>
</comment>
<comment type="PTM">
    <text evidence="2">The N-terminus is blocked possibly by pyroglutamic acid.</text>
</comment>
<comment type="miscellaneous">
    <text evidence="2">Some rotavirus strains are neuraminidase-sensitive and require sialic acid to attach to the cell surface. Some rotavirus strains are integrin-dependent. Some rotavirus strains depend on ganglioside for their entry into the host cell. Hsp70 also seems to be involved in the entry of some strains.</text>
</comment>
<comment type="miscellaneous">
    <text evidence="2">In group A rotaviruses, VP7 defines the G serotype.</text>
</comment>
<comment type="miscellaneous">
    <molecule>Isoform 2</molecule>
    <text evidence="3">Produced by alternative initiation at Met-30 of isoform 1.</text>
</comment>
<comment type="similarity">
    <text evidence="2">Belongs to the rotavirus VP7 family.</text>
</comment>
<evidence type="ECO:0000255" key="1"/>
<evidence type="ECO:0000255" key="2">
    <source>
        <dbReference type="HAMAP-Rule" id="MF_04131"/>
    </source>
</evidence>
<evidence type="ECO:0000305" key="3"/>
<organismHost>
    <name type="scientific">Homo sapiens</name>
    <name type="common">Human</name>
    <dbReference type="NCBI Taxonomy" id="9606"/>
</organismHost>
<reference key="1">
    <citation type="journal article" date="1989" name="J. Virol.">
        <title>Complete nucleotide sequence of the gene encoding VP4 of a human rotavirus (strain K8) which has unique VP4 neutralization epitopes.</title>
        <authorList>
            <person name="Taniguchi K."/>
            <person name="Nishikawa K."/>
            <person name="Urasawa T."/>
            <person name="Urasawa S."/>
            <person name="Midthun K."/>
            <person name="Kapikian A.Z."/>
            <person name="Gorziglia M."/>
        </authorList>
    </citation>
    <scope>NUCLEOTIDE SEQUENCE [MRNA]</scope>
</reference>
<feature type="signal peptide" evidence="2">
    <location>
        <begin position="1"/>
        <end position="50"/>
    </location>
</feature>
<feature type="chain" id="PRO_0000369112" description="Outer capsid glycoprotein VP7" evidence="2">
    <location>
        <begin position="51"/>
        <end position="326"/>
    </location>
</feature>
<feature type="region of interest" description="CNP motif; interaction with ITGAV/ITGB3" evidence="2">
    <location>
        <begin position="165"/>
        <end position="167"/>
    </location>
</feature>
<feature type="region of interest" description="GPR motif; interaction with ITGAX/ITGB2" evidence="2">
    <location>
        <begin position="253"/>
        <end position="255"/>
    </location>
</feature>
<feature type="binding site" evidence="2">
    <location>
        <position position="95"/>
    </location>
    <ligand>
        <name>Ca(2+)</name>
        <dbReference type="ChEBI" id="CHEBI:29108"/>
        <label>1</label>
    </ligand>
</feature>
<feature type="binding site" evidence="2">
    <location>
        <position position="177"/>
    </location>
    <ligand>
        <name>Ca(2+)</name>
        <dbReference type="ChEBI" id="CHEBI:29108"/>
        <label>2</label>
    </ligand>
</feature>
<feature type="binding site" evidence="2">
    <location>
        <position position="206"/>
    </location>
    <ligand>
        <name>Ca(2+)</name>
        <dbReference type="ChEBI" id="CHEBI:29108"/>
        <label>1</label>
    </ligand>
</feature>
<feature type="binding site" evidence="2">
    <location>
        <position position="214"/>
    </location>
    <ligand>
        <name>Ca(2+)</name>
        <dbReference type="ChEBI" id="CHEBI:29108"/>
        <label>1</label>
    </ligand>
</feature>
<feature type="binding site" evidence="2">
    <location>
        <position position="216"/>
    </location>
    <ligand>
        <name>Ca(2+)</name>
        <dbReference type="ChEBI" id="CHEBI:29108"/>
        <label>1</label>
    </ligand>
</feature>
<feature type="binding site" evidence="2">
    <location>
        <position position="228"/>
    </location>
    <ligand>
        <name>Ca(2+)</name>
        <dbReference type="ChEBI" id="CHEBI:29108"/>
        <label>2</label>
    </ligand>
</feature>
<feature type="binding site" evidence="2">
    <location>
        <position position="229"/>
    </location>
    <ligand>
        <name>Ca(2+)</name>
        <dbReference type="ChEBI" id="CHEBI:29108"/>
        <label>2</label>
    </ligand>
</feature>
<feature type="binding site" evidence="2">
    <location>
        <position position="231"/>
    </location>
    <ligand>
        <name>Ca(2+)</name>
        <dbReference type="ChEBI" id="CHEBI:29108"/>
        <label>2</label>
    </ligand>
</feature>
<feature type="binding site" evidence="2">
    <location>
        <position position="301"/>
    </location>
    <ligand>
        <name>Ca(2+)</name>
        <dbReference type="ChEBI" id="CHEBI:29108"/>
        <label>2</label>
    </ligand>
</feature>
<feature type="glycosylation site" description="N-linked (GlcNAc...) asparagine; by host" evidence="1">
    <location>
        <position position="69"/>
    </location>
</feature>
<feature type="glycosylation site" description="N-linked (GlcNAc...) asparagine; by host" evidence="1">
    <location>
        <position position="238"/>
    </location>
</feature>
<feature type="disulfide bond" evidence="2">
    <location>
        <begin position="82"/>
        <end position="135"/>
    </location>
</feature>
<feature type="disulfide bond" evidence="2">
    <location>
        <begin position="165"/>
        <end position="249"/>
    </location>
</feature>
<feature type="disulfide bond" evidence="2">
    <location>
        <begin position="191"/>
        <end position="244"/>
    </location>
</feature>
<feature type="disulfide bond" evidence="2">
    <location>
        <begin position="196"/>
        <end position="207"/>
    </location>
</feature>
<feature type="splice variant" id="VSP_038620" description="In isoform 2." evidence="3">
    <location>
        <begin position="1"/>
        <end position="29"/>
    </location>
</feature>
<sequence>MYGIEYTTILIFLISIILLNYILKSVTRIMDYIIYRFLLITIALFALTRAQNYGLNLPITGSMDTVYTNSTQEEVFLTSTLCLYYPNEASTQINDGDWKDSLSQMFLTKGWPTGSVYFKEYSSIVDFSVDPQLYCDYNLVLMKYDQSLELDMSELADLILNEWLCNPMDITLYYYQQSGESNKWISMGSSCTVKVCPLNTQTLGIGCQTTNVDSFEMVAENEKLAIVDVVDGINHKINLTTTTCTIRNCKKLGPRENVAVIQVGGSNVLDITADPTTNPQTERMMRVNWKKWWQVFYTIVDYINQIVQVMSKRSRSLNSAAFYYRV</sequence>
<protein>
    <recommendedName>
        <fullName evidence="2">Outer capsid glycoprotein VP7</fullName>
    </recommendedName>
</protein>
<keyword id="KW-0024">Alternative initiation</keyword>
<keyword id="KW-0106">Calcium</keyword>
<keyword id="KW-0167">Capsid protein</keyword>
<keyword id="KW-1015">Disulfide bond</keyword>
<keyword id="KW-0325">Glycoprotein</keyword>
<keyword id="KW-1038">Host endoplasmic reticulum</keyword>
<keyword id="KW-0945">Host-virus interaction</keyword>
<keyword id="KW-0479">Metal-binding</keyword>
<keyword id="KW-1152">Outer capsid protein</keyword>
<keyword id="KW-0732">Signal</keyword>
<keyword id="KW-1146">T=13 icosahedral capsid protein</keyword>
<keyword id="KW-0946">Virion</keyword>
<name>VP7_ROTHJ</name>